<feature type="initiator methionine" description="Removed" evidence="2">
    <location>
        <position position="1"/>
    </location>
</feature>
<feature type="chain" id="PRO_0000171969" description="Phytochrome A type 5">
    <location>
        <begin position="2"/>
        <end position="495" status="greater than"/>
    </location>
</feature>
<feature type="domain" description="GAF">
    <location>
        <begin position="217"/>
        <end position="402"/>
    </location>
</feature>
<feature type="region of interest" description="Disordered" evidence="1">
    <location>
        <begin position="1"/>
        <end position="24"/>
    </location>
</feature>
<feature type="compositionally biased region" description="Low complexity" evidence="1">
    <location>
        <begin position="1"/>
        <end position="21"/>
    </location>
</feature>
<feature type="binding site" description="covalent">
    <location>
        <position position="322"/>
    </location>
    <ligand>
        <name>phytochromobilin</name>
        <dbReference type="ChEBI" id="CHEBI:189064"/>
    </ligand>
</feature>
<feature type="non-terminal residue">
    <location>
        <position position="495"/>
    </location>
</feature>
<dbReference type="EMBL" id="X03244">
    <property type="protein sequence ID" value="CAA27001.1"/>
    <property type="molecule type" value="mRNA"/>
</dbReference>
<dbReference type="PIR" id="S00098">
    <property type="entry name" value="S00098"/>
</dbReference>
<dbReference type="SMR" id="P06595"/>
<dbReference type="GO" id="GO:0009881">
    <property type="term" value="F:photoreceptor activity"/>
    <property type="evidence" value="ECO:0007669"/>
    <property type="project" value="UniProtKB-KW"/>
</dbReference>
<dbReference type="GO" id="GO:0009584">
    <property type="term" value="P:detection of visible light"/>
    <property type="evidence" value="ECO:0007669"/>
    <property type="project" value="InterPro"/>
</dbReference>
<dbReference type="GO" id="GO:0006355">
    <property type="term" value="P:regulation of DNA-templated transcription"/>
    <property type="evidence" value="ECO:0007669"/>
    <property type="project" value="InterPro"/>
</dbReference>
<dbReference type="FunFam" id="3.30.450.270:FF:000001">
    <property type="entry name" value="Phytochrome"/>
    <property type="match status" value="1"/>
</dbReference>
<dbReference type="Gene3D" id="3.30.450.270">
    <property type="match status" value="1"/>
</dbReference>
<dbReference type="Gene3D" id="3.30.450.40">
    <property type="match status" value="1"/>
</dbReference>
<dbReference type="Gene3D" id="3.30.450.20">
    <property type="entry name" value="PAS domain"/>
    <property type="match status" value="1"/>
</dbReference>
<dbReference type="InterPro" id="IPR003018">
    <property type="entry name" value="GAF"/>
</dbReference>
<dbReference type="InterPro" id="IPR029016">
    <property type="entry name" value="GAF-like_dom_sf"/>
</dbReference>
<dbReference type="InterPro" id="IPR035965">
    <property type="entry name" value="PAS-like_dom_sf"/>
</dbReference>
<dbReference type="InterPro" id="IPR013654">
    <property type="entry name" value="PAS_2"/>
</dbReference>
<dbReference type="InterPro" id="IPR016132">
    <property type="entry name" value="Phyto_chromo_attachment"/>
</dbReference>
<dbReference type="InterPro" id="IPR013516">
    <property type="entry name" value="Phyto_chromo_BS"/>
</dbReference>
<dbReference type="InterPro" id="IPR001294">
    <property type="entry name" value="Phytochrome"/>
</dbReference>
<dbReference type="InterPro" id="IPR013515">
    <property type="entry name" value="Phytochrome_cen-reg"/>
</dbReference>
<dbReference type="InterPro" id="IPR043150">
    <property type="entry name" value="Phytochrome_PHY_sf"/>
</dbReference>
<dbReference type="PANTHER" id="PTHR47876">
    <property type="entry name" value="OS08G0260000 PROTEIN"/>
    <property type="match status" value="1"/>
</dbReference>
<dbReference type="PANTHER" id="PTHR47876:SF3">
    <property type="entry name" value="PHYTOCHROME 1"/>
    <property type="match status" value="1"/>
</dbReference>
<dbReference type="Pfam" id="PF01590">
    <property type="entry name" value="GAF"/>
    <property type="match status" value="1"/>
</dbReference>
<dbReference type="Pfam" id="PF08446">
    <property type="entry name" value="PAS_2"/>
    <property type="match status" value="1"/>
</dbReference>
<dbReference type="Pfam" id="PF00360">
    <property type="entry name" value="PHY"/>
    <property type="match status" value="1"/>
</dbReference>
<dbReference type="PRINTS" id="PR01033">
    <property type="entry name" value="PHYTOCHROME"/>
</dbReference>
<dbReference type="SMART" id="SM00065">
    <property type="entry name" value="GAF"/>
    <property type="match status" value="1"/>
</dbReference>
<dbReference type="SUPFAM" id="SSF55781">
    <property type="entry name" value="GAF domain-like"/>
    <property type="match status" value="2"/>
</dbReference>
<dbReference type="SUPFAM" id="SSF55785">
    <property type="entry name" value="PYP-like sensor domain (PAS domain)"/>
    <property type="match status" value="1"/>
</dbReference>
<dbReference type="PROSITE" id="PS00245">
    <property type="entry name" value="PHYTOCHROME_1"/>
    <property type="match status" value="1"/>
</dbReference>
<dbReference type="PROSITE" id="PS50046">
    <property type="entry name" value="PHYTOCHROME_2"/>
    <property type="match status" value="1"/>
</dbReference>
<keyword id="KW-0157">Chromophore</keyword>
<keyword id="KW-0903">Direct protein sequencing</keyword>
<keyword id="KW-0600">Photoreceptor protein</keyword>
<keyword id="KW-0675">Receptor</keyword>
<keyword id="KW-0716">Sensory transduction</keyword>
<keyword id="KW-0804">Transcription</keyword>
<keyword id="KW-0805">Transcription regulation</keyword>
<organism>
    <name type="scientific">Avena sativa</name>
    <name type="common">Oat</name>
    <dbReference type="NCBI Taxonomy" id="4498"/>
    <lineage>
        <taxon>Eukaryota</taxon>
        <taxon>Viridiplantae</taxon>
        <taxon>Streptophyta</taxon>
        <taxon>Embryophyta</taxon>
        <taxon>Tracheophyta</taxon>
        <taxon>Spermatophyta</taxon>
        <taxon>Magnoliopsida</taxon>
        <taxon>Liliopsida</taxon>
        <taxon>Poales</taxon>
        <taxon>Poaceae</taxon>
        <taxon>BOP clade</taxon>
        <taxon>Pooideae</taxon>
        <taxon>Poodae</taxon>
        <taxon>Poeae</taxon>
        <taxon>Poeae Chloroplast Group 1 (Aveneae type)</taxon>
        <taxon>Aveninae</taxon>
        <taxon>Avena</taxon>
    </lineage>
</organism>
<comment type="function">
    <text>Regulatory photoreceptor which exists in two forms that are reversibly interconvertible by light: the Pr form that absorbs maximally in the red region of the spectrum and the Pfr form that absorbs maximally in the far-red region. Photoconversion of Pr to Pfr induces an array of morphogenic responses, whereas reconversion of Pfr to Pr cancels the induction of those responses. Pfr controls the expression of a number of nuclear genes including those encoding the small subunit of ribulose-bisphosphate carboxylase, chlorophyll A/B binding protein, protochlorophyllide reductase, rRNA, etc. It also controls the expression of its own gene(s) in a negative feedback fashion.</text>
</comment>
<comment type="subunit">
    <text>Homodimer.</text>
</comment>
<comment type="PTM">
    <text>Contains one covalently linked phytochromobilin chromophore.</text>
</comment>
<comment type="similarity">
    <text evidence="3">Belongs to the phytochrome family.</text>
</comment>
<proteinExistence type="evidence at protein level"/>
<gene>
    <name type="primary">PHYA5</name>
    <name type="synonym">PHY5</name>
</gene>
<accession>P06595</accession>
<protein>
    <recommendedName>
        <fullName>Phytochrome A type 5</fullName>
        <shortName>AP5</shortName>
    </recommendedName>
</protein>
<name>PHYA5_AVESA</name>
<reference key="1">
    <citation type="journal article" date="1985" name="Nucleic Acids Res.">
        <title>Analysis of cloned cDNA and genomic sequences for phytochrome: complete amino acid sequences for two gene products expressed in etiolated Avena.</title>
        <authorList>
            <person name="Hershey H.P."/>
            <person name="Barker R.F."/>
            <person name="Idler K.B."/>
            <person name="Lissemore J.L."/>
            <person name="Quail P.H."/>
        </authorList>
    </citation>
    <scope>NUCLEOTIDE SEQUENCE [MRNA]</scope>
</reference>
<reference key="2">
    <citation type="journal article" date="1988" name="FEBS Lett.">
        <title>The amino-terminal structure of oat phytochrome.</title>
        <authorList>
            <person name="Grimm R."/>
            <person name="Kellermann J."/>
            <person name="Schaefer W."/>
            <person name="Ruediger W."/>
        </authorList>
    </citation>
    <scope>PROTEIN SEQUENCE OF 2-13</scope>
</reference>
<sequence length="495" mass="54803">MSSSRPASSSSSRNRQSSQARVLAQTTLDAELNAEYEESGDSFDYSKLVEAQRDGPPVQQGRSEKVIAYLQHIQKGKLIQTFGCLLALDEKSFNVIAFSENAPEMLTTVSHAVPSVDDPPRLGIGTNVRSLFSDQGATALHKALGFADVSLLNPILVQCKTSGKPFYAIVHRATGCLVVDFEPVKPTEFPATAAGALQSYKLAAKAISKIQSLPGGSMEMLCNTVVKEVFDLTGYDRVMAYKFHEDDHGEVFSEITKPGLEPYLGLHYPATDIPQAARFLFMKNKVRMICDCRARSIKVIEAEALPFDISLCGSALRAPHSCHLQYMENMNSIASLVMAVVVNENEEDDEAESEQPAQQQKKKKLWGLLVCHHESPRYVPFPLRYACEFLAQVFAVHVNREFELEKQLREKNILKMQTMLSDMLFREASPLTIVSGNPNIMDLVKCDGAALLYGGKVWRLRNAPTESQIHDIAFWLSDVHRDSTGLSTDSLHDAG</sequence>
<evidence type="ECO:0000256" key="1">
    <source>
        <dbReference type="SAM" id="MobiDB-lite"/>
    </source>
</evidence>
<evidence type="ECO:0000269" key="2">
    <source ref="2"/>
</evidence>
<evidence type="ECO:0000305" key="3"/>